<comment type="function">
    <text evidence="1">Catalyzes the formation of a hydroxyacyl-CoA by addition of water on enoyl-CoA. Also exhibits 3-hydroxyacyl-CoA epimerase and 3-hydroxyacyl-CoA dehydrogenase activities.</text>
</comment>
<comment type="catalytic activity">
    <reaction evidence="1">
        <text>a (3S)-3-hydroxyacyl-CoA = a (2E)-enoyl-CoA + H2O</text>
        <dbReference type="Rhea" id="RHEA:16105"/>
        <dbReference type="ChEBI" id="CHEBI:15377"/>
        <dbReference type="ChEBI" id="CHEBI:57318"/>
        <dbReference type="ChEBI" id="CHEBI:58856"/>
        <dbReference type="EC" id="4.2.1.17"/>
    </reaction>
</comment>
<comment type="catalytic activity">
    <reaction evidence="1">
        <text>a 4-saturated-(3S)-3-hydroxyacyl-CoA = a (3E)-enoyl-CoA + H2O</text>
        <dbReference type="Rhea" id="RHEA:20724"/>
        <dbReference type="ChEBI" id="CHEBI:15377"/>
        <dbReference type="ChEBI" id="CHEBI:58521"/>
        <dbReference type="ChEBI" id="CHEBI:137480"/>
        <dbReference type="EC" id="4.2.1.17"/>
    </reaction>
</comment>
<comment type="catalytic activity">
    <reaction evidence="1">
        <text>a (3S)-3-hydroxyacyl-CoA + NAD(+) = a 3-oxoacyl-CoA + NADH + H(+)</text>
        <dbReference type="Rhea" id="RHEA:22432"/>
        <dbReference type="ChEBI" id="CHEBI:15378"/>
        <dbReference type="ChEBI" id="CHEBI:57318"/>
        <dbReference type="ChEBI" id="CHEBI:57540"/>
        <dbReference type="ChEBI" id="CHEBI:57945"/>
        <dbReference type="ChEBI" id="CHEBI:90726"/>
        <dbReference type="EC" id="1.1.1.35"/>
    </reaction>
</comment>
<comment type="catalytic activity">
    <reaction evidence="1">
        <text>(3S)-3-hydroxybutanoyl-CoA = (3R)-3-hydroxybutanoyl-CoA</text>
        <dbReference type="Rhea" id="RHEA:21760"/>
        <dbReference type="ChEBI" id="CHEBI:57315"/>
        <dbReference type="ChEBI" id="CHEBI:57316"/>
        <dbReference type="EC" id="5.1.2.3"/>
    </reaction>
</comment>
<comment type="pathway">
    <text evidence="1">Lipid metabolism; fatty acid beta-oxidation.</text>
</comment>
<comment type="subunit">
    <text evidence="1">Heterotetramer of two alpha chains (FadJ) and two beta chains (FadI).</text>
</comment>
<comment type="subcellular location">
    <subcellularLocation>
        <location evidence="1">Cytoplasm</location>
    </subcellularLocation>
</comment>
<comment type="similarity">
    <text evidence="1">In the N-terminal section; belongs to the enoyl-CoA hydratase/isomerase family.</text>
</comment>
<comment type="similarity">
    <text evidence="1">In the central section; belongs to the 3-hydroxyacyl-CoA dehydrogenase family.</text>
</comment>
<sequence length="714" mass="77723">MDTVSAFKLEVRADKIAVITIDAPGEKMNTLKAEFGNQVRGLIRQVRDDKSVRGVVFISAKTDNFIAGADINMIARCRSAQEAEALARQGQQIMAEIHGLSIPVIAAIHGACLGGGLELALACHGRICSDDEKTRLGLPEVQLGLLPGSGGTQRLPRLIGVSTALDMMLTGRQLRARQALKAGLVDEVVPQAILLQAAVELALKGRPASRDMPVRERVLAGPLGRHLLFHFVGKQTQRKTQGNYPAVKRILQVVENGLAHGCSSGYAEEARAFGELAMTPQSQALRSIFFASTDLKKDRGAEAEPGPLTSIAVLGGGLMGGGIAYVTACKGGLPVRIKDIQPRGINHALKYSWDLLNKQVRQRRLRPSERDRQMAMISGATDYQGFAHRDVVIEAVFEDLALKQRMVSEVEQYCGPQTIFASNTSSLPIGDIAAQARRPGRVIGLHFFSPVEKMPLVEVIPHKGTDPQAIATVVQLAKRQGKTPIVVADKAGFYVNRILAPYINEAMRLLVEGEPVEEIDKALVKFGFPVGPIQLLDEVGIDTGTKIIPVLESAFGERFSSPANIIDAILKDDRKGRKNNRGFYLYETKGRKSKKRPDPAVYPLLGIDRPQSRLSAQQVAERCVMMMLNEAARCFDEQIIRSARDGDIGAVFGIGFPPFLGGPFRYMDTIGAGEVAAILQRLAAQYGPRFTPCDTLLRMAEQGTTFWPADERLT</sequence>
<gene>
    <name evidence="1" type="primary">fadJ</name>
    <name type="ordered locus">KPK_1416</name>
</gene>
<dbReference type="EC" id="4.2.1.17" evidence="1"/>
<dbReference type="EC" id="5.1.2.3" evidence="1"/>
<dbReference type="EC" id="1.1.1.35" evidence="1"/>
<dbReference type="EMBL" id="CP000964">
    <property type="protein sequence ID" value="ACI07081.1"/>
    <property type="molecule type" value="Genomic_DNA"/>
</dbReference>
<dbReference type="SMR" id="B5XVW2"/>
<dbReference type="KEGG" id="kpe:KPK_1416"/>
<dbReference type="HOGENOM" id="CLU_009834_16_1_6"/>
<dbReference type="UniPathway" id="UPA00659"/>
<dbReference type="Proteomes" id="UP000001734">
    <property type="component" value="Chromosome"/>
</dbReference>
<dbReference type="GO" id="GO:0005737">
    <property type="term" value="C:cytoplasm"/>
    <property type="evidence" value="ECO:0007669"/>
    <property type="project" value="UniProtKB-SubCell"/>
</dbReference>
<dbReference type="GO" id="GO:0008692">
    <property type="term" value="F:3-hydroxybutyryl-CoA epimerase activity"/>
    <property type="evidence" value="ECO:0007669"/>
    <property type="project" value="UniProtKB-UniRule"/>
</dbReference>
<dbReference type="GO" id="GO:0004300">
    <property type="term" value="F:enoyl-CoA hydratase activity"/>
    <property type="evidence" value="ECO:0007669"/>
    <property type="project" value="UniProtKB-UniRule"/>
</dbReference>
<dbReference type="GO" id="GO:0016509">
    <property type="term" value="F:long-chain-3-hydroxyacyl-CoA dehydrogenase activity"/>
    <property type="evidence" value="ECO:0007669"/>
    <property type="project" value="TreeGrafter"/>
</dbReference>
<dbReference type="GO" id="GO:0070403">
    <property type="term" value="F:NAD+ binding"/>
    <property type="evidence" value="ECO:0007669"/>
    <property type="project" value="InterPro"/>
</dbReference>
<dbReference type="GO" id="GO:0006635">
    <property type="term" value="P:fatty acid beta-oxidation"/>
    <property type="evidence" value="ECO:0007669"/>
    <property type="project" value="UniProtKB-UniRule"/>
</dbReference>
<dbReference type="CDD" id="cd06558">
    <property type="entry name" value="crotonase-like"/>
    <property type="match status" value="1"/>
</dbReference>
<dbReference type="FunFam" id="1.10.1040.50:FF:000003">
    <property type="entry name" value="Fatty acid oxidation complex subunit alpha"/>
    <property type="match status" value="1"/>
</dbReference>
<dbReference type="FunFam" id="3.90.226.10:FF:000011">
    <property type="entry name" value="Fatty acid oxidation complex subunit alpha"/>
    <property type="match status" value="1"/>
</dbReference>
<dbReference type="FunFam" id="3.40.50.720:FF:000009">
    <property type="entry name" value="Fatty oxidation complex, alpha subunit"/>
    <property type="match status" value="1"/>
</dbReference>
<dbReference type="Gene3D" id="1.10.1040.50">
    <property type="match status" value="1"/>
</dbReference>
<dbReference type="Gene3D" id="3.90.226.10">
    <property type="entry name" value="2-enoyl-CoA Hydratase, Chain A, domain 1"/>
    <property type="match status" value="1"/>
</dbReference>
<dbReference type="Gene3D" id="3.40.50.720">
    <property type="entry name" value="NAD(P)-binding Rossmann-like Domain"/>
    <property type="match status" value="1"/>
</dbReference>
<dbReference type="HAMAP" id="MF_01617">
    <property type="entry name" value="FadJ"/>
    <property type="match status" value="1"/>
</dbReference>
<dbReference type="InterPro" id="IPR006180">
    <property type="entry name" value="3-OHacyl-CoA_DH_CS"/>
</dbReference>
<dbReference type="InterPro" id="IPR006176">
    <property type="entry name" value="3-OHacyl-CoA_DH_NAD-bd"/>
</dbReference>
<dbReference type="InterPro" id="IPR006108">
    <property type="entry name" value="3HC_DH_C"/>
</dbReference>
<dbReference type="InterPro" id="IPR008927">
    <property type="entry name" value="6-PGluconate_DH-like_C_sf"/>
</dbReference>
<dbReference type="InterPro" id="IPR029045">
    <property type="entry name" value="ClpP/crotonase-like_dom_sf"/>
</dbReference>
<dbReference type="InterPro" id="IPR001753">
    <property type="entry name" value="Enoyl-CoA_hydra/iso"/>
</dbReference>
<dbReference type="InterPro" id="IPR050136">
    <property type="entry name" value="FA_oxidation_alpha_subunit"/>
</dbReference>
<dbReference type="InterPro" id="IPR012802">
    <property type="entry name" value="FadJ"/>
</dbReference>
<dbReference type="InterPro" id="IPR036291">
    <property type="entry name" value="NAD(P)-bd_dom_sf"/>
</dbReference>
<dbReference type="NCBIfam" id="TIGR02440">
    <property type="entry name" value="FadJ"/>
    <property type="match status" value="1"/>
</dbReference>
<dbReference type="NCBIfam" id="NF008363">
    <property type="entry name" value="PRK11154.1"/>
    <property type="match status" value="1"/>
</dbReference>
<dbReference type="PANTHER" id="PTHR43612">
    <property type="entry name" value="TRIFUNCTIONAL ENZYME SUBUNIT ALPHA"/>
    <property type="match status" value="1"/>
</dbReference>
<dbReference type="PANTHER" id="PTHR43612:SF3">
    <property type="entry name" value="TRIFUNCTIONAL ENZYME SUBUNIT ALPHA, MITOCHONDRIAL"/>
    <property type="match status" value="1"/>
</dbReference>
<dbReference type="Pfam" id="PF00725">
    <property type="entry name" value="3HCDH"/>
    <property type="match status" value="2"/>
</dbReference>
<dbReference type="Pfam" id="PF02737">
    <property type="entry name" value="3HCDH_N"/>
    <property type="match status" value="1"/>
</dbReference>
<dbReference type="Pfam" id="PF00378">
    <property type="entry name" value="ECH_1"/>
    <property type="match status" value="1"/>
</dbReference>
<dbReference type="SUPFAM" id="SSF48179">
    <property type="entry name" value="6-phosphogluconate dehydrogenase C-terminal domain-like"/>
    <property type="match status" value="2"/>
</dbReference>
<dbReference type="SUPFAM" id="SSF52096">
    <property type="entry name" value="ClpP/crotonase"/>
    <property type="match status" value="1"/>
</dbReference>
<dbReference type="SUPFAM" id="SSF51735">
    <property type="entry name" value="NAD(P)-binding Rossmann-fold domains"/>
    <property type="match status" value="1"/>
</dbReference>
<dbReference type="PROSITE" id="PS00067">
    <property type="entry name" value="3HCDH"/>
    <property type="match status" value="1"/>
</dbReference>
<proteinExistence type="inferred from homology"/>
<protein>
    <recommendedName>
        <fullName evidence="1">Fatty acid oxidation complex subunit alpha</fullName>
    </recommendedName>
    <domain>
        <recommendedName>
            <fullName evidence="1">Enoyl-CoA hydratase/3-hydroxybutyryl-CoA epimerase</fullName>
            <ecNumber evidence="1">4.2.1.17</ecNumber>
            <ecNumber evidence="1">5.1.2.3</ecNumber>
        </recommendedName>
    </domain>
    <domain>
        <recommendedName>
            <fullName evidence="1">3-hydroxyacyl-CoA dehydrogenase</fullName>
            <ecNumber evidence="1">1.1.1.35</ecNumber>
        </recommendedName>
    </domain>
</protein>
<evidence type="ECO:0000255" key="1">
    <source>
        <dbReference type="HAMAP-Rule" id="MF_01617"/>
    </source>
</evidence>
<keyword id="KW-0963">Cytoplasm</keyword>
<keyword id="KW-0276">Fatty acid metabolism</keyword>
<keyword id="KW-0413">Isomerase</keyword>
<keyword id="KW-0442">Lipid degradation</keyword>
<keyword id="KW-0443">Lipid metabolism</keyword>
<keyword id="KW-0456">Lyase</keyword>
<keyword id="KW-0511">Multifunctional enzyme</keyword>
<keyword id="KW-0520">NAD</keyword>
<keyword id="KW-0560">Oxidoreductase</keyword>
<organism>
    <name type="scientific">Klebsiella pneumoniae (strain 342)</name>
    <dbReference type="NCBI Taxonomy" id="507522"/>
    <lineage>
        <taxon>Bacteria</taxon>
        <taxon>Pseudomonadati</taxon>
        <taxon>Pseudomonadota</taxon>
        <taxon>Gammaproteobacteria</taxon>
        <taxon>Enterobacterales</taxon>
        <taxon>Enterobacteriaceae</taxon>
        <taxon>Klebsiella/Raoultella group</taxon>
        <taxon>Klebsiella</taxon>
        <taxon>Klebsiella pneumoniae complex</taxon>
    </lineage>
</organism>
<accession>B5XVW2</accession>
<reference key="1">
    <citation type="journal article" date="2008" name="PLoS Genet.">
        <title>Complete genome sequence of the N2-fixing broad host range endophyte Klebsiella pneumoniae 342 and virulence predictions verified in mice.</title>
        <authorList>
            <person name="Fouts D.E."/>
            <person name="Tyler H.L."/>
            <person name="DeBoy R.T."/>
            <person name="Daugherty S."/>
            <person name="Ren Q."/>
            <person name="Badger J.H."/>
            <person name="Durkin A.S."/>
            <person name="Huot H."/>
            <person name="Shrivastava S."/>
            <person name="Kothari S."/>
            <person name="Dodson R.J."/>
            <person name="Mohamoud Y."/>
            <person name="Khouri H."/>
            <person name="Roesch L.F.W."/>
            <person name="Krogfelt K.A."/>
            <person name="Struve C."/>
            <person name="Triplett E.W."/>
            <person name="Methe B.A."/>
        </authorList>
    </citation>
    <scope>NUCLEOTIDE SEQUENCE [LARGE SCALE GENOMIC DNA]</scope>
    <source>
        <strain>342</strain>
    </source>
</reference>
<name>FADJ_KLEP3</name>
<feature type="chain" id="PRO_1000185946" description="Fatty acid oxidation complex subunit alpha">
    <location>
        <begin position="1"/>
        <end position="714"/>
    </location>
</feature>
<feature type="region of interest" description="Enoyl-CoA hydratase" evidence="1">
    <location>
        <begin position="1"/>
        <end position="190"/>
    </location>
</feature>
<feature type="region of interest" description="3-hydroxyacyl-CoA dehydrogenase" evidence="1">
    <location>
        <begin position="306"/>
        <end position="714"/>
    </location>
</feature>
<feature type="site" description="Important for catalytic activity" evidence="1">
    <location>
        <position position="118"/>
    </location>
</feature>
<feature type="site" description="Important for catalytic activity" evidence="1">
    <location>
        <position position="140"/>
    </location>
</feature>